<dbReference type="EC" id="4.2.1.11" evidence="1"/>
<dbReference type="EMBL" id="AE015451">
    <property type="protein sequence ID" value="AAN67233.1"/>
    <property type="molecule type" value="Genomic_DNA"/>
</dbReference>
<dbReference type="RefSeq" id="NP_743769.1">
    <property type="nucleotide sequence ID" value="NC_002947.4"/>
</dbReference>
<dbReference type="RefSeq" id="WP_003252333.1">
    <property type="nucleotide sequence ID" value="NZ_CP169744.1"/>
</dbReference>
<dbReference type="SMR" id="Q88MF9"/>
<dbReference type="STRING" id="160488.PP_1612"/>
<dbReference type="PaxDb" id="160488-PP_1612"/>
<dbReference type="GeneID" id="83681909"/>
<dbReference type="KEGG" id="ppu:PP_1612"/>
<dbReference type="PATRIC" id="fig|160488.4.peg.1703"/>
<dbReference type="eggNOG" id="COG0148">
    <property type="taxonomic scope" value="Bacteria"/>
</dbReference>
<dbReference type="HOGENOM" id="CLU_031223_2_1_6"/>
<dbReference type="OrthoDB" id="9804716at2"/>
<dbReference type="PhylomeDB" id="Q88MF9"/>
<dbReference type="BioCyc" id="PPUT160488:G1G01-1709-MONOMER"/>
<dbReference type="UniPathway" id="UPA00109">
    <property type="reaction ID" value="UER00187"/>
</dbReference>
<dbReference type="Proteomes" id="UP000000556">
    <property type="component" value="Chromosome"/>
</dbReference>
<dbReference type="GO" id="GO:0009986">
    <property type="term" value="C:cell surface"/>
    <property type="evidence" value="ECO:0007669"/>
    <property type="project" value="UniProtKB-SubCell"/>
</dbReference>
<dbReference type="GO" id="GO:0005576">
    <property type="term" value="C:extracellular region"/>
    <property type="evidence" value="ECO:0007669"/>
    <property type="project" value="UniProtKB-SubCell"/>
</dbReference>
<dbReference type="GO" id="GO:0000015">
    <property type="term" value="C:phosphopyruvate hydratase complex"/>
    <property type="evidence" value="ECO:0007669"/>
    <property type="project" value="InterPro"/>
</dbReference>
<dbReference type="GO" id="GO:0000287">
    <property type="term" value="F:magnesium ion binding"/>
    <property type="evidence" value="ECO:0007669"/>
    <property type="project" value="UniProtKB-UniRule"/>
</dbReference>
<dbReference type="GO" id="GO:0004634">
    <property type="term" value="F:phosphopyruvate hydratase activity"/>
    <property type="evidence" value="ECO:0007669"/>
    <property type="project" value="UniProtKB-UniRule"/>
</dbReference>
<dbReference type="GO" id="GO:0006096">
    <property type="term" value="P:glycolytic process"/>
    <property type="evidence" value="ECO:0007669"/>
    <property type="project" value="UniProtKB-UniRule"/>
</dbReference>
<dbReference type="CDD" id="cd03313">
    <property type="entry name" value="enolase"/>
    <property type="match status" value="1"/>
</dbReference>
<dbReference type="FunFam" id="3.20.20.120:FF:000001">
    <property type="entry name" value="Enolase"/>
    <property type="match status" value="1"/>
</dbReference>
<dbReference type="FunFam" id="3.30.390.10:FF:000001">
    <property type="entry name" value="Enolase"/>
    <property type="match status" value="1"/>
</dbReference>
<dbReference type="Gene3D" id="3.20.20.120">
    <property type="entry name" value="Enolase-like C-terminal domain"/>
    <property type="match status" value="1"/>
</dbReference>
<dbReference type="Gene3D" id="3.30.390.10">
    <property type="entry name" value="Enolase-like, N-terminal domain"/>
    <property type="match status" value="1"/>
</dbReference>
<dbReference type="HAMAP" id="MF_00318">
    <property type="entry name" value="Enolase"/>
    <property type="match status" value="1"/>
</dbReference>
<dbReference type="InterPro" id="IPR000941">
    <property type="entry name" value="Enolase"/>
</dbReference>
<dbReference type="InterPro" id="IPR036849">
    <property type="entry name" value="Enolase-like_C_sf"/>
</dbReference>
<dbReference type="InterPro" id="IPR029017">
    <property type="entry name" value="Enolase-like_N"/>
</dbReference>
<dbReference type="InterPro" id="IPR020810">
    <property type="entry name" value="Enolase_C"/>
</dbReference>
<dbReference type="InterPro" id="IPR020809">
    <property type="entry name" value="Enolase_CS"/>
</dbReference>
<dbReference type="InterPro" id="IPR020811">
    <property type="entry name" value="Enolase_N"/>
</dbReference>
<dbReference type="NCBIfam" id="TIGR01060">
    <property type="entry name" value="eno"/>
    <property type="match status" value="1"/>
</dbReference>
<dbReference type="PANTHER" id="PTHR11902">
    <property type="entry name" value="ENOLASE"/>
    <property type="match status" value="1"/>
</dbReference>
<dbReference type="PANTHER" id="PTHR11902:SF1">
    <property type="entry name" value="ENOLASE"/>
    <property type="match status" value="1"/>
</dbReference>
<dbReference type="Pfam" id="PF00113">
    <property type="entry name" value="Enolase_C"/>
    <property type="match status" value="1"/>
</dbReference>
<dbReference type="Pfam" id="PF03952">
    <property type="entry name" value="Enolase_N"/>
    <property type="match status" value="1"/>
</dbReference>
<dbReference type="PIRSF" id="PIRSF001400">
    <property type="entry name" value="Enolase"/>
    <property type="match status" value="1"/>
</dbReference>
<dbReference type="PRINTS" id="PR00148">
    <property type="entry name" value="ENOLASE"/>
</dbReference>
<dbReference type="SFLD" id="SFLDF00002">
    <property type="entry name" value="enolase"/>
    <property type="match status" value="1"/>
</dbReference>
<dbReference type="SFLD" id="SFLDG00178">
    <property type="entry name" value="enolase"/>
    <property type="match status" value="1"/>
</dbReference>
<dbReference type="SMART" id="SM01192">
    <property type="entry name" value="Enolase_C"/>
    <property type="match status" value="1"/>
</dbReference>
<dbReference type="SMART" id="SM01193">
    <property type="entry name" value="Enolase_N"/>
    <property type="match status" value="1"/>
</dbReference>
<dbReference type="SUPFAM" id="SSF51604">
    <property type="entry name" value="Enolase C-terminal domain-like"/>
    <property type="match status" value="1"/>
</dbReference>
<dbReference type="SUPFAM" id="SSF54826">
    <property type="entry name" value="Enolase N-terminal domain-like"/>
    <property type="match status" value="1"/>
</dbReference>
<dbReference type="PROSITE" id="PS00164">
    <property type="entry name" value="ENOLASE"/>
    <property type="match status" value="1"/>
</dbReference>
<protein>
    <recommendedName>
        <fullName evidence="1">Enolase</fullName>
        <ecNumber evidence="1">4.2.1.11</ecNumber>
    </recommendedName>
    <alternativeName>
        <fullName evidence="1">2-phospho-D-glycerate hydro-lyase</fullName>
    </alternativeName>
    <alternativeName>
        <fullName evidence="1">2-phosphoglycerate dehydratase</fullName>
    </alternativeName>
</protein>
<keyword id="KW-0963">Cytoplasm</keyword>
<keyword id="KW-0324">Glycolysis</keyword>
<keyword id="KW-0456">Lyase</keyword>
<keyword id="KW-0460">Magnesium</keyword>
<keyword id="KW-0479">Metal-binding</keyword>
<keyword id="KW-1185">Reference proteome</keyword>
<keyword id="KW-0964">Secreted</keyword>
<name>ENO_PSEPK</name>
<comment type="function">
    <text evidence="1">Catalyzes the reversible conversion of 2-phosphoglycerate (2-PG) into phosphoenolpyruvate (PEP). It is essential for the degradation of carbohydrates via glycolysis.</text>
</comment>
<comment type="catalytic activity">
    <reaction evidence="1">
        <text>(2R)-2-phosphoglycerate = phosphoenolpyruvate + H2O</text>
        <dbReference type="Rhea" id="RHEA:10164"/>
        <dbReference type="ChEBI" id="CHEBI:15377"/>
        <dbReference type="ChEBI" id="CHEBI:58289"/>
        <dbReference type="ChEBI" id="CHEBI:58702"/>
        <dbReference type="EC" id="4.2.1.11"/>
    </reaction>
</comment>
<comment type="cofactor">
    <cofactor evidence="1">
        <name>Mg(2+)</name>
        <dbReference type="ChEBI" id="CHEBI:18420"/>
    </cofactor>
    <text evidence="1">Binds a second Mg(2+) ion via substrate during catalysis.</text>
</comment>
<comment type="pathway">
    <text evidence="1">Carbohydrate degradation; glycolysis; pyruvate from D-glyceraldehyde 3-phosphate: step 4/5.</text>
</comment>
<comment type="subunit">
    <text evidence="1">Component of the RNA degradosome, a multiprotein complex involved in RNA processing and mRNA degradation.</text>
</comment>
<comment type="subcellular location">
    <subcellularLocation>
        <location evidence="1">Cytoplasm</location>
    </subcellularLocation>
    <subcellularLocation>
        <location evidence="1">Secreted</location>
    </subcellularLocation>
    <subcellularLocation>
        <location evidence="1">Cell surface</location>
    </subcellularLocation>
    <text evidence="1">Fractions of enolase are present in both the cytoplasm and on the cell surface.</text>
</comment>
<comment type="similarity">
    <text evidence="1">Belongs to the enolase family.</text>
</comment>
<reference key="1">
    <citation type="journal article" date="2002" name="Environ. Microbiol.">
        <title>Complete genome sequence and comparative analysis of the metabolically versatile Pseudomonas putida KT2440.</title>
        <authorList>
            <person name="Nelson K.E."/>
            <person name="Weinel C."/>
            <person name="Paulsen I.T."/>
            <person name="Dodson R.J."/>
            <person name="Hilbert H."/>
            <person name="Martins dos Santos V.A.P."/>
            <person name="Fouts D.E."/>
            <person name="Gill S.R."/>
            <person name="Pop M."/>
            <person name="Holmes M."/>
            <person name="Brinkac L.M."/>
            <person name="Beanan M.J."/>
            <person name="DeBoy R.T."/>
            <person name="Daugherty S.C."/>
            <person name="Kolonay J.F."/>
            <person name="Madupu R."/>
            <person name="Nelson W.C."/>
            <person name="White O."/>
            <person name="Peterson J.D."/>
            <person name="Khouri H.M."/>
            <person name="Hance I."/>
            <person name="Chris Lee P."/>
            <person name="Holtzapple E.K."/>
            <person name="Scanlan D."/>
            <person name="Tran K."/>
            <person name="Moazzez A."/>
            <person name="Utterback T.R."/>
            <person name="Rizzo M."/>
            <person name="Lee K."/>
            <person name="Kosack D."/>
            <person name="Moestl D."/>
            <person name="Wedler H."/>
            <person name="Lauber J."/>
            <person name="Stjepandic D."/>
            <person name="Hoheisel J."/>
            <person name="Straetz M."/>
            <person name="Heim S."/>
            <person name="Kiewitz C."/>
            <person name="Eisen J.A."/>
            <person name="Timmis K.N."/>
            <person name="Duesterhoeft A."/>
            <person name="Tuemmler B."/>
            <person name="Fraser C.M."/>
        </authorList>
    </citation>
    <scope>NUCLEOTIDE SEQUENCE [LARGE SCALE GENOMIC DNA]</scope>
    <source>
        <strain>ATCC 47054 / DSM 6125 / CFBP 8728 / NCIMB 11950 / KT2440</strain>
    </source>
</reference>
<accession>Q88MF9</accession>
<organism>
    <name type="scientific">Pseudomonas putida (strain ATCC 47054 / DSM 6125 / CFBP 8728 / NCIMB 11950 / KT2440)</name>
    <dbReference type="NCBI Taxonomy" id="160488"/>
    <lineage>
        <taxon>Bacteria</taxon>
        <taxon>Pseudomonadati</taxon>
        <taxon>Pseudomonadota</taxon>
        <taxon>Gammaproteobacteria</taxon>
        <taxon>Pseudomonadales</taxon>
        <taxon>Pseudomonadaceae</taxon>
        <taxon>Pseudomonas</taxon>
    </lineage>
</organism>
<sequence length="429" mass="45490">MAKIVDIKGREVLDSRGNPTVEADVLLDNGIIGSACAPSGASTGSREALELRDGDKSRYLGKGVLKAVANINGPIRDLLLGKDPSDQKALDRAMIELDGTENKAKLGANAILAVSLAAAKAAAQDQDLPLYAHIANLNGTPGQYSMPVPMMNIINGGEHADNNVDIQEFMVQPVGAKTFSDGLRMGTEIFHHLKAVLKARGLNTAVGDEGGFAPNLASNEDALGAIAEAVEKAGYKLGTDVTLALDCAASEFYEDGKYNLSGEGKSFDAEGFADYLKGLTERFPIISIEDGLDESDWAGWKILTDKIGEKVQLVGDDLFVTNTKILKEGIEKGIGNSILIKFNQIGSLTETLEAIQMAKAAGYTAVISHRSGETEDSTIADLAVGTAAGQIKTGSLCRSDRVSKYNQLLRIEEQLGAKAVYRGRAEFRG</sequence>
<proteinExistence type="inferred from homology"/>
<gene>
    <name evidence="1" type="primary">eno</name>
    <name type="ordered locus">PP_1612</name>
</gene>
<evidence type="ECO:0000255" key="1">
    <source>
        <dbReference type="HAMAP-Rule" id="MF_00318"/>
    </source>
</evidence>
<feature type="chain" id="PRO_0000133950" description="Enolase">
    <location>
        <begin position="1"/>
        <end position="429"/>
    </location>
</feature>
<feature type="active site" description="Proton donor" evidence="1">
    <location>
        <position position="209"/>
    </location>
</feature>
<feature type="active site" description="Proton acceptor" evidence="1">
    <location>
        <position position="341"/>
    </location>
</feature>
<feature type="binding site" evidence="1">
    <location>
        <position position="167"/>
    </location>
    <ligand>
        <name>(2R)-2-phosphoglycerate</name>
        <dbReference type="ChEBI" id="CHEBI:58289"/>
    </ligand>
</feature>
<feature type="binding site" evidence="1">
    <location>
        <position position="246"/>
    </location>
    <ligand>
        <name>Mg(2+)</name>
        <dbReference type="ChEBI" id="CHEBI:18420"/>
    </ligand>
</feature>
<feature type="binding site" evidence="1">
    <location>
        <position position="289"/>
    </location>
    <ligand>
        <name>Mg(2+)</name>
        <dbReference type="ChEBI" id="CHEBI:18420"/>
    </ligand>
</feature>
<feature type="binding site" evidence="1">
    <location>
        <position position="316"/>
    </location>
    <ligand>
        <name>Mg(2+)</name>
        <dbReference type="ChEBI" id="CHEBI:18420"/>
    </ligand>
</feature>
<feature type="binding site" evidence="1">
    <location>
        <position position="341"/>
    </location>
    <ligand>
        <name>(2R)-2-phosphoglycerate</name>
        <dbReference type="ChEBI" id="CHEBI:58289"/>
    </ligand>
</feature>
<feature type="binding site" evidence="1">
    <location>
        <position position="370"/>
    </location>
    <ligand>
        <name>(2R)-2-phosphoglycerate</name>
        <dbReference type="ChEBI" id="CHEBI:58289"/>
    </ligand>
</feature>
<feature type="binding site" evidence="1">
    <location>
        <position position="371"/>
    </location>
    <ligand>
        <name>(2R)-2-phosphoglycerate</name>
        <dbReference type="ChEBI" id="CHEBI:58289"/>
    </ligand>
</feature>
<feature type="binding site" evidence="1">
    <location>
        <position position="392"/>
    </location>
    <ligand>
        <name>(2R)-2-phosphoglycerate</name>
        <dbReference type="ChEBI" id="CHEBI:58289"/>
    </ligand>
</feature>